<sequence>MQKNQIVDLEITDLSYEAMGVAHLDGMTVFVNNALPGEIVSAKLLKVKKNFAFAKIEKIKKESPDRINVKLRQWVQTGLASLAHIKYDKQLEFKRNQVVNLLHKADLDNVKVGQTMPSPEETGYRNKAQVPVREVNGKLDIGFFRKHSHDLVPLTSFFTTDPEIDRVLIKVRDILRKNHVPAYDEIHNKGEVRYLEVRRSKATGEIMVILVCLHKDFPQLKEVTKEISEIKGVTSVVLNHNPKKTNVILGKKDYLLWGEPQITDKIGDVSFKISPQSFFQINSLQTPRLYDLAIQKADLKPDDVVIDAYSGIGTIGLSVAKHVKAVRGMEVIEPAVEDANANAKLNGITNAEYVVGKAEEVMPRWAKEGLKTDVIFVDPPRKGLTPEFIDAAVETNPKKIVYISCNPATMVRDLQLFKEQGYDFDEIDPVDMFPQTPHVEAVAVLERTEK</sequence>
<gene>
    <name type="ordered locus">LJ_1698</name>
</gene>
<keyword id="KW-0489">Methyltransferase</keyword>
<keyword id="KW-0949">S-adenosyl-L-methionine</keyword>
<keyword id="KW-0808">Transferase</keyword>
<dbReference type="EC" id="2.1.1.-"/>
<dbReference type="EMBL" id="AE017198">
    <property type="protein sequence ID" value="AAS09471.1"/>
    <property type="molecule type" value="Genomic_DNA"/>
</dbReference>
<dbReference type="RefSeq" id="WP_011162379.1">
    <property type="nucleotide sequence ID" value="NC_005362.1"/>
</dbReference>
<dbReference type="SMR" id="Q74I68"/>
<dbReference type="GeneID" id="83570891"/>
<dbReference type="KEGG" id="ljo:LJ_1698"/>
<dbReference type="PATRIC" id="fig|257314.6.peg.1523"/>
<dbReference type="eggNOG" id="COG2265">
    <property type="taxonomic scope" value="Bacteria"/>
</dbReference>
<dbReference type="HOGENOM" id="CLU_014689_7_0_9"/>
<dbReference type="Proteomes" id="UP000000581">
    <property type="component" value="Chromosome"/>
</dbReference>
<dbReference type="GO" id="GO:0070041">
    <property type="term" value="F:rRNA (uridine-C5-)-methyltransferase activity"/>
    <property type="evidence" value="ECO:0007669"/>
    <property type="project" value="TreeGrafter"/>
</dbReference>
<dbReference type="GO" id="GO:0070475">
    <property type="term" value="P:rRNA base methylation"/>
    <property type="evidence" value="ECO:0007669"/>
    <property type="project" value="TreeGrafter"/>
</dbReference>
<dbReference type="CDD" id="cd02440">
    <property type="entry name" value="AdoMet_MTases"/>
    <property type="match status" value="1"/>
</dbReference>
<dbReference type="FunFam" id="3.40.50.150:FF:000009">
    <property type="entry name" value="23S rRNA (Uracil(1939)-C(5))-methyltransferase RlmD"/>
    <property type="match status" value="1"/>
</dbReference>
<dbReference type="FunFam" id="2.40.50.1070:FF:000003">
    <property type="entry name" value="23S rRNA (Uracil-5-)-methyltransferase RumA"/>
    <property type="match status" value="1"/>
</dbReference>
<dbReference type="Gene3D" id="2.40.50.1070">
    <property type="match status" value="1"/>
</dbReference>
<dbReference type="Gene3D" id="2.40.50.140">
    <property type="entry name" value="Nucleic acid-binding proteins"/>
    <property type="match status" value="1"/>
</dbReference>
<dbReference type="Gene3D" id="3.40.50.150">
    <property type="entry name" value="Vaccinia Virus protein VP39"/>
    <property type="match status" value="1"/>
</dbReference>
<dbReference type="InterPro" id="IPR030390">
    <property type="entry name" value="MeTrfase_TrmA_AS"/>
</dbReference>
<dbReference type="InterPro" id="IPR030391">
    <property type="entry name" value="MeTrfase_TrmA_CS"/>
</dbReference>
<dbReference type="InterPro" id="IPR012340">
    <property type="entry name" value="NA-bd_OB-fold"/>
</dbReference>
<dbReference type="InterPro" id="IPR029063">
    <property type="entry name" value="SAM-dependent_MTases_sf"/>
</dbReference>
<dbReference type="InterPro" id="IPR002792">
    <property type="entry name" value="TRAM_dom"/>
</dbReference>
<dbReference type="InterPro" id="IPR010280">
    <property type="entry name" value="U5_MeTrfase_fam"/>
</dbReference>
<dbReference type="NCBIfam" id="TIGR00479">
    <property type="entry name" value="rumA"/>
    <property type="match status" value="1"/>
</dbReference>
<dbReference type="PANTHER" id="PTHR11061">
    <property type="entry name" value="RNA M5U METHYLTRANSFERASE"/>
    <property type="match status" value="1"/>
</dbReference>
<dbReference type="PANTHER" id="PTHR11061:SF30">
    <property type="entry name" value="TRNA (URACIL(54)-C(5))-METHYLTRANSFERASE"/>
    <property type="match status" value="1"/>
</dbReference>
<dbReference type="Pfam" id="PF01938">
    <property type="entry name" value="TRAM"/>
    <property type="match status" value="1"/>
</dbReference>
<dbReference type="Pfam" id="PF05958">
    <property type="entry name" value="tRNA_U5-meth_tr"/>
    <property type="match status" value="1"/>
</dbReference>
<dbReference type="SUPFAM" id="SSF50249">
    <property type="entry name" value="Nucleic acid-binding proteins"/>
    <property type="match status" value="1"/>
</dbReference>
<dbReference type="SUPFAM" id="SSF53335">
    <property type="entry name" value="S-adenosyl-L-methionine-dependent methyltransferases"/>
    <property type="match status" value="1"/>
</dbReference>
<dbReference type="PROSITE" id="PS51687">
    <property type="entry name" value="SAM_MT_RNA_M5U"/>
    <property type="match status" value="1"/>
</dbReference>
<dbReference type="PROSITE" id="PS50926">
    <property type="entry name" value="TRAM"/>
    <property type="match status" value="1"/>
</dbReference>
<dbReference type="PROSITE" id="PS01230">
    <property type="entry name" value="TRMA_1"/>
    <property type="match status" value="1"/>
</dbReference>
<dbReference type="PROSITE" id="PS01231">
    <property type="entry name" value="TRMA_2"/>
    <property type="match status" value="1"/>
</dbReference>
<organism>
    <name type="scientific">Lactobacillus johnsonii (strain CNCM I-12250 / La1 / NCC 533)</name>
    <dbReference type="NCBI Taxonomy" id="257314"/>
    <lineage>
        <taxon>Bacteria</taxon>
        <taxon>Bacillati</taxon>
        <taxon>Bacillota</taxon>
        <taxon>Bacilli</taxon>
        <taxon>Lactobacillales</taxon>
        <taxon>Lactobacillaceae</taxon>
        <taxon>Lactobacillus</taxon>
    </lineage>
</organism>
<reference key="1">
    <citation type="journal article" date="2004" name="Proc. Natl. Acad. Sci. U.S.A.">
        <title>The genome sequence of the probiotic intestinal bacterium Lactobacillus johnsonii NCC 533.</title>
        <authorList>
            <person name="Pridmore R.D."/>
            <person name="Berger B."/>
            <person name="Desiere F."/>
            <person name="Vilanova D."/>
            <person name="Barretto C."/>
            <person name="Pittet A.-C."/>
            <person name="Zwahlen M.-C."/>
            <person name="Rouvet M."/>
            <person name="Altermann E."/>
            <person name="Barrangou R."/>
            <person name="Mollet B."/>
            <person name="Mercenier A."/>
            <person name="Klaenhammer T."/>
            <person name="Arigoni F."/>
            <person name="Schell M.A."/>
        </authorList>
    </citation>
    <scope>NUCLEOTIDE SEQUENCE [LARGE SCALE GENOMIC DNA]</scope>
    <source>
        <strain>CNCM I-1225 / La1 / NCC 533</strain>
    </source>
</reference>
<proteinExistence type="inferred from homology"/>
<comment type="similarity">
    <text evidence="2">Belongs to the class I-like SAM-binding methyltransferase superfamily. RNA M5U methyltransferase family.</text>
</comment>
<evidence type="ECO:0000255" key="1">
    <source>
        <dbReference type="PROSITE-ProRule" id="PRU00208"/>
    </source>
</evidence>
<evidence type="ECO:0000255" key="2">
    <source>
        <dbReference type="PROSITE-ProRule" id="PRU01024"/>
    </source>
</evidence>
<name>Y1698_LACJO</name>
<feature type="chain" id="PRO_0000161986" description="Uncharacterized RNA methyltransferase LJ_1698">
    <location>
        <begin position="1"/>
        <end position="450"/>
    </location>
</feature>
<feature type="domain" description="TRAM" evidence="1">
    <location>
        <begin position="1"/>
        <end position="58"/>
    </location>
</feature>
<feature type="active site" description="Nucleophile" evidence="2">
    <location>
        <position position="405"/>
    </location>
</feature>
<feature type="binding site" evidence="2">
    <location>
        <position position="280"/>
    </location>
    <ligand>
        <name>S-adenosyl-L-methionine</name>
        <dbReference type="ChEBI" id="CHEBI:59789"/>
    </ligand>
</feature>
<feature type="binding site" evidence="2">
    <location>
        <position position="309"/>
    </location>
    <ligand>
        <name>S-adenosyl-L-methionine</name>
        <dbReference type="ChEBI" id="CHEBI:59789"/>
    </ligand>
</feature>
<feature type="binding site" evidence="2">
    <location>
        <position position="330"/>
    </location>
    <ligand>
        <name>S-adenosyl-L-methionine</name>
        <dbReference type="ChEBI" id="CHEBI:59789"/>
    </ligand>
</feature>
<feature type="binding site" evidence="2">
    <location>
        <position position="378"/>
    </location>
    <ligand>
        <name>S-adenosyl-L-methionine</name>
        <dbReference type="ChEBI" id="CHEBI:59789"/>
    </ligand>
</feature>
<accession>Q74I68</accession>
<protein>
    <recommendedName>
        <fullName>Uncharacterized RNA methyltransferase LJ_1698</fullName>
        <ecNumber>2.1.1.-</ecNumber>
    </recommendedName>
</protein>